<proteinExistence type="inferred from homology"/>
<organism>
    <name type="scientific">Rhizobium meliloti (strain 1021)</name>
    <name type="common">Ensifer meliloti</name>
    <name type="synonym">Sinorhizobium meliloti</name>
    <dbReference type="NCBI Taxonomy" id="266834"/>
    <lineage>
        <taxon>Bacteria</taxon>
        <taxon>Pseudomonadati</taxon>
        <taxon>Pseudomonadota</taxon>
        <taxon>Alphaproteobacteria</taxon>
        <taxon>Hyphomicrobiales</taxon>
        <taxon>Rhizobiaceae</taxon>
        <taxon>Sinorhizobium/Ensifer group</taxon>
        <taxon>Sinorhizobium</taxon>
    </lineage>
</organism>
<dbReference type="EMBL" id="AL591688">
    <property type="protein sequence ID" value="CAC41820.1"/>
    <property type="molecule type" value="Genomic_DNA"/>
</dbReference>
<dbReference type="EMBL" id="M24926">
    <property type="protein sequence ID" value="AAA26347.1"/>
    <property type="molecule type" value="Genomic_DNA"/>
</dbReference>
<dbReference type="PIR" id="A32835">
    <property type="entry name" value="A32835"/>
</dbReference>
<dbReference type="RefSeq" id="NP_384489.1">
    <property type="nucleotide sequence ID" value="NC_003047.1"/>
</dbReference>
<dbReference type="RefSeq" id="WP_003527719.1">
    <property type="nucleotide sequence ID" value="NC_003047.1"/>
</dbReference>
<dbReference type="SMR" id="P25893"/>
<dbReference type="DNASU" id="1232017"/>
<dbReference type="EnsemblBacteria" id="CAC41820">
    <property type="protein sequence ID" value="CAC41820"/>
    <property type="gene ID" value="SMc01137"/>
</dbReference>
<dbReference type="KEGG" id="sme:SMc01137"/>
<dbReference type="PATRIC" id="fig|266834.11.peg.1756"/>
<dbReference type="eggNOG" id="COG1934">
    <property type="taxonomic scope" value="Bacteria"/>
</dbReference>
<dbReference type="HOGENOM" id="CLU_095993_0_1_5"/>
<dbReference type="OrthoDB" id="9811926at2"/>
<dbReference type="Proteomes" id="UP000001976">
    <property type="component" value="Chromosome"/>
</dbReference>
<dbReference type="GO" id="GO:0009279">
    <property type="term" value="C:cell outer membrane"/>
    <property type="evidence" value="ECO:0007669"/>
    <property type="project" value="TreeGrafter"/>
</dbReference>
<dbReference type="GO" id="GO:0030288">
    <property type="term" value="C:outer membrane-bounded periplasmic space"/>
    <property type="evidence" value="ECO:0007669"/>
    <property type="project" value="TreeGrafter"/>
</dbReference>
<dbReference type="GO" id="GO:0017089">
    <property type="term" value="F:glycolipid transfer activity"/>
    <property type="evidence" value="ECO:0007669"/>
    <property type="project" value="TreeGrafter"/>
</dbReference>
<dbReference type="GO" id="GO:0015920">
    <property type="term" value="P:lipopolysaccharide transport"/>
    <property type="evidence" value="ECO:0007669"/>
    <property type="project" value="TreeGrafter"/>
</dbReference>
<dbReference type="Gene3D" id="2.60.450.10">
    <property type="entry name" value="Lipopolysaccharide (LPS) transport protein A like domain"/>
    <property type="match status" value="1"/>
</dbReference>
<dbReference type="InterPro" id="IPR052037">
    <property type="entry name" value="LPS_export_LptA"/>
</dbReference>
<dbReference type="InterPro" id="IPR005653">
    <property type="entry name" value="OstA-like_N"/>
</dbReference>
<dbReference type="PANTHER" id="PTHR36504">
    <property type="entry name" value="LIPOPOLYSACCHARIDE EXPORT SYSTEM PROTEIN LPTA"/>
    <property type="match status" value="1"/>
</dbReference>
<dbReference type="PANTHER" id="PTHR36504:SF1">
    <property type="entry name" value="LIPOPOLYSACCHARIDE EXPORT SYSTEM PROTEIN LPTA"/>
    <property type="match status" value="1"/>
</dbReference>
<dbReference type="Pfam" id="PF03968">
    <property type="entry name" value="LptD_N"/>
    <property type="match status" value="1"/>
</dbReference>
<protein>
    <recommendedName>
        <fullName>Uncharacterized protein R00383</fullName>
    </recommendedName>
</protein>
<accession>P25893</accession>
<evidence type="ECO:0000255" key="1"/>
<sequence length="186" mass="19311">MSVKPAALFRISAALAVAGLGASLIASAALAQATSSRMQGLQLSNDQPIQIESDKLEIKDPESKAIFTGNVKVVQGTTTLQAGNMTVFYKAGGGSVTSGNADIDRIEVSNKVFLSSGAQQATGESGIVNLTNQTIVLKGKKVVLSEGKNVFVGCQLNVQMDTGEAQLDACGGRVQIQLDPQSRKTN</sequence>
<feature type="signal peptide" evidence="1">
    <location>
        <begin position="1"/>
        <end position="28"/>
    </location>
</feature>
<feature type="chain" id="PRO_0000014219" description="Uncharacterized protein R00383">
    <location>
        <begin position="29"/>
        <end position="186"/>
    </location>
</feature>
<gene>
    <name type="ordered locus">R00383</name>
    <name type="ORF">SMc01137</name>
</gene>
<keyword id="KW-1185">Reference proteome</keyword>
<keyword id="KW-0732">Signal</keyword>
<name>Y383_RHIME</name>
<reference key="1">
    <citation type="journal article" date="2001" name="Proc. Natl. Acad. Sci. U.S.A.">
        <title>Analysis of the chromosome sequence of the legume symbiont Sinorhizobium meliloti strain 1021.</title>
        <authorList>
            <person name="Capela D."/>
            <person name="Barloy-Hubler F."/>
            <person name="Gouzy J."/>
            <person name="Bothe G."/>
            <person name="Ampe F."/>
            <person name="Batut J."/>
            <person name="Boistard P."/>
            <person name="Becker A."/>
            <person name="Boutry M."/>
            <person name="Cadieu E."/>
            <person name="Dreano S."/>
            <person name="Gloux S."/>
            <person name="Godrie T."/>
            <person name="Goffeau A."/>
            <person name="Kahn D."/>
            <person name="Kiss E."/>
            <person name="Lelaure V."/>
            <person name="Masuy D."/>
            <person name="Pohl T."/>
            <person name="Portetelle D."/>
            <person name="Puehler A."/>
            <person name="Purnelle B."/>
            <person name="Ramsperger U."/>
            <person name="Renard C."/>
            <person name="Thebault P."/>
            <person name="Vandenbol M."/>
            <person name="Weidner S."/>
            <person name="Galibert F."/>
        </authorList>
    </citation>
    <scope>NUCLEOTIDE SEQUENCE [LARGE SCALE GENOMIC DNA]</scope>
    <source>
        <strain>1021</strain>
    </source>
</reference>
<reference key="2">
    <citation type="journal article" date="2001" name="Science">
        <title>The composite genome of the legume symbiont Sinorhizobium meliloti.</title>
        <authorList>
            <person name="Galibert F."/>
            <person name="Finan T.M."/>
            <person name="Long S.R."/>
            <person name="Puehler A."/>
            <person name="Abola P."/>
            <person name="Ampe F."/>
            <person name="Barloy-Hubler F."/>
            <person name="Barnett M.J."/>
            <person name="Becker A."/>
            <person name="Boistard P."/>
            <person name="Bothe G."/>
            <person name="Boutry M."/>
            <person name="Bowser L."/>
            <person name="Buhrmester J."/>
            <person name="Cadieu E."/>
            <person name="Capela D."/>
            <person name="Chain P."/>
            <person name="Cowie A."/>
            <person name="Davis R.W."/>
            <person name="Dreano S."/>
            <person name="Federspiel N.A."/>
            <person name="Fisher R.F."/>
            <person name="Gloux S."/>
            <person name="Godrie T."/>
            <person name="Goffeau A."/>
            <person name="Golding B."/>
            <person name="Gouzy J."/>
            <person name="Gurjal M."/>
            <person name="Hernandez-Lucas I."/>
            <person name="Hong A."/>
            <person name="Huizar L."/>
            <person name="Hyman R.W."/>
            <person name="Jones T."/>
            <person name="Kahn D."/>
            <person name="Kahn M.L."/>
            <person name="Kalman S."/>
            <person name="Keating D.H."/>
            <person name="Kiss E."/>
            <person name="Komp C."/>
            <person name="Lelaure V."/>
            <person name="Masuy D."/>
            <person name="Palm C."/>
            <person name="Peck M.C."/>
            <person name="Pohl T.M."/>
            <person name="Portetelle D."/>
            <person name="Purnelle B."/>
            <person name="Ramsperger U."/>
            <person name="Surzycki R."/>
            <person name="Thebault P."/>
            <person name="Vandenbol M."/>
            <person name="Vorhoelter F.J."/>
            <person name="Weidner S."/>
            <person name="Wells D.H."/>
            <person name="Wong K."/>
            <person name="Yeh K.-C."/>
            <person name="Batut J."/>
        </authorList>
    </citation>
    <scope>NUCLEOTIDE SEQUENCE [LARGE SCALE GENOMIC DNA]</scope>
    <source>
        <strain>1021</strain>
    </source>
</reference>
<reference key="3">
    <citation type="journal article" date="1989" name="J. Bacteriol.">
        <title>Identification of a gene linked to Rhizobium meliloti ntrA whose product is homologous to a family to ATP-binding proteins.</title>
        <authorList>
            <person name="Albright L.M."/>
            <person name="Ronson C.W."/>
            <person name="Nixon B.T."/>
            <person name="Ausubel F.M."/>
        </authorList>
    </citation>
    <scope>NUCLEOTIDE SEQUENCE [GENOMIC DNA] OF 60-186</scope>
</reference>